<keyword id="KW-0028">Amino-acid biosynthesis</keyword>
<keyword id="KW-0963">Cytoplasm</keyword>
<keyword id="KW-0521">NADP</keyword>
<keyword id="KW-0560">Oxidoreductase</keyword>
<keyword id="KW-0641">Proline biosynthesis</keyword>
<keyword id="KW-1185">Reference proteome</keyword>
<accession>Q04FB2</accession>
<organism>
    <name type="scientific">Oenococcus oeni (strain ATCC BAA-331 / PSU-1)</name>
    <dbReference type="NCBI Taxonomy" id="203123"/>
    <lineage>
        <taxon>Bacteria</taxon>
        <taxon>Bacillati</taxon>
        <taxon>Bacillota</taxon>
        <taxon>Bacilli</taxon>
        <taxon>Lactobacillales</taxon>
        <taxon>Lactobacillaceae</taxon>
        <taxon>Oenococcus</taxon>
    </lineage>
</organism>
<sequence>MNTNKLHKQINLIGERAQAASQIVSGLSIDERNKILLSFASEIEKNSDKIVEINVQELKEHRDDLSLPMQKRLQLSKEKISTIASSLKALVKLADPLSEGNTSWQAKAGFKVVKKTVPLGVVAMIYEARPNVTIDAAALTIKSANAVILRGGKESIKTNQVLVSILQQSLKKLGYSENIVQLIEDTSHDSVKELLHLRKFIDVLIPRGSGSFINYVVDNSTVPVIETGAGNDHIFVDKSADQEEAIKVIVNSKIQNPSVCNSAEKLLVHADIAKEFLPKLFDRLSNEGVEIRGDKEVQLIDNRVELAKDFDWDTEYNDLIIAVHLVNNLKEAIDWIGKHTTHHTEAILTNSAENASEFMQRIDAAVVTENASTRFTDGFEFGFGAEIGISTQKLHARGPMGLTALTSYKYEIFGHGEIRK</sequence>
<gene>
    <name evidence="1" type="primary">proA</name>
    <name type="ordered locus">OEOE_0948</name>
</gene>
<name>PROA_OENOB</name>
<reference key="1">
    <citation type="journal article" date="2006" name="Proc. Natl. Acad. Sci. U.S.A.">
        <title>Comparative genomics of the lactic acid bacteria.</title>
        <authorList>
            <person name="Makarova K.S."/>
            <person name="Slesarev A."/>
            <person name="Wolf Y.I."/>
            <person name="Sorokin A."/>
            <person name="Mirkin B."/>
            <person name="Koonin E.V."/>
            <person name="Pavlov A."/>
            <person name="Pavlova N."/>
            <person name="Karamychev V."/>
            <person name="Polouchine N."/>
            <person name="Shakhova V."/>
            <person name="Grigoriev I."/>
            <person name="Lou Y."/>
            <person name="Rohksar D."/>
            <person name="Lucas S."/>
            <person name="Huang K."/>
            <person name="Goodstein D.M."/>
            <person name="Hawkins T."/>
            <person name="Plengvidhya V."/>
            <person name="Welker D."/>
            <person name="Hughes J."/>
            <person name="Goh Y."/>
            <person name="Benson A."/>
            <person name="Baldwin K."/>
            <person name="Lee J.-H."/>
            <person name="Diaz-Muniz I."/>
            <person name="Dosti B."/>
            <person name="Smeianov V."/>
            <person name="Wechter W."/>
            <person name="Barabote R."/>
            <person name="Lorca G."/>
            <person name="Altermann E."/>
            <person name="Barrangou R."/>
            <person name="Ganesan B."/>
            <person name="Xie Y."/>
            <person name="Rawsthorne H."/>
            <person name="Tamir D."/>
            <person name="Parker C."/>
            <person name="Breidt F."/>
            <person name="Broadbent J.R."/>
            <person name="Hutkins R."/>
            <person name="O'Sullivan D."/>
            <person name="Steele J."/>
            <person name="Unlu G."/>
            <person name="Saier M.H. Jr."/>
            <person name="Klaenhammer T."/>
            <person name="Richardson P."/>
            <person name="Kozyavkin S."/>
            <person name="Weimer B.C."/>
            <person name="Mills D.A."/>
        </authorList>
    </citation>
    <scope>NUCLEOTIDE SEQUENCE [LARGE SCALE GENOMIC DNA]</scope>
    <source>
        <strain>ATCC BAA-331 / PSU-1</strain>
    </source>
</reference>
<dbReference type="EC" id="1.2.1.41" evidence="1"/>
<dbReference type="EMBL" id="CP000411">
    <property type="protein sequence ID" value="ABJ56860.1"/>
    <property type="molecule type" value="Genomic_DNA"/>
</dbReference>
<dbReference type="RefSeq" id="WP_002824274.1">
    <property type="nucleotide sequence ID" value="NC_008528.1"/>
</dbReference>
<dbReference type="SMR" id="Q04FB2"/>
<dbReference type="STRING" id="203123.OEOE_0948"/>
<dbReference type="KEGG" id="ooe:OEOE_0948"/>
<dbReference type="PATRIC" id="fig|203123.7.peg.962"/>
<dbReference type="eggNOG" id="COG0014">
    <property type="taxonomic scope" value="Bacteria"/>
</dbReference>
<dbReference type="HOGENOM" id="CLU_030231_0_0_9"/>
<dbReference type="UniPathway" id="UPA00098">
    <property type="reaction ID" value="UER00360"/>
</dbReference>
<dbReference type="Proteomes" id="UP000000774">
    <property type="component" value="Chromosome"/>
</dbReference>
<dbReference type="GO" id="GO:0005737">
    <property type="term" value="C:cytoplasm"/>
    <property type="evidence" value="ECO:0007669"/>
    <property type="project" value="UniProtKB-SubCell"/>
</dbReference>
<dbReference type="GO" id="GO:0004350">
    <property type="term" value="F:glutamate-5-semialdehyde dehydrogenase activity"/>
    <property type="evidence" value="ECO:0007669"/>
    <property type="project" value="UniProtKB-UniRule"/>
</dbReference>
<dbReference type="GO" id="GO:0050661">
    <property type="term" value="F:NADP binding"/>
    <property type="evidence" value="ECO:0007669"/>
    <property type="project" value="InterPro"/>
</dbReference>
<dbReference type="GO" id="GO:0055129">
    <property type="term" value="P:L-proline biosynthetic process"/>
    <property type="evidence" value="ECO:0007669"/>
    <property type="project" value="UniProtKB-UniRule"/>
</dbReference>
<dbReference type="CDD" id="cd07079">
    <property type="entry name" value="ALDH_F18-19_ProA-GPR"/>
    <property type="match status" value="1"/>
</dbReference>
<dbReference type="FunFam" id="3.40.309.10:FF:000006">
    <property type="entry name" value="Gamma-glutamyl phosphate reductase"/>
    <property type="match status" value="1"/>
</dbReference>
<dbReference type="Gene3D" id="3.40.605.10">
    <property type="entry name" value="Aldehyde Dehydrogenase, Chain A, domain 1"/>
    <property type="match status" value="1"/>
</dbReference>
<dbReference type="Gene3D" id="3.40.309.10">
    <property type="entry name" value="Aldehyde Dehydrogenase, Chain A, domain 2"/>
    <property type="match status" value="1"/>
</dbReference>
<dbReference type="HAMAP" id="MF_00412">
    <property type="entry name" value="ProA"/>
    <property type="match status" value="1"/>
</dbReference>
<dbReference type="InterPro" id="IPR016161">
    <property type="entry name" value="Ald_DH/histidinol_DH"/>
</dbReference>
<dbReference type="InterPro" id="IPR016163">
    <property type="entry name" value="Ald_DH_C"/>
</dbReference>
<dbReference type="InterPro" id="IPR016162">
    <property type="entry name" value="Ald_DH_N"/>
</dbReference>
<dbReference type="InterPro" id="IPR015590">
    <property type="entry name" value="Aldehyde_DH_dom"/>
</dbReference>
<dbReference type="InterPro" id="IPR020593">
    <property type="entry name" value="G-glutamylP_reductase_CS"/>
</dbReference>
<dbReference type="InterPro" id="IPR012134">
    <property type="entry name" value="Glu-5-SA_DH"/>
</dbReference>
<dbReference type="InterPro" id="IPR000965">
    <property type="entry name" value="GPR_dom"/>
</dbReference>
<dbReference type="NCBIfam" id="NF001221">
    <property type="entry name" value="PRK00197.1"/>
    <property type="match status" value="1"/>
</dbReference>
<dbReference type="NCBIfam" id="TIGR00407">
    <property type="entry name" value="proA"/>
    <property type="match status" value="1"/>
</dbReference>
<dbReference type="PANTHER" id="PTHR11063:SF8">
    <property type="entry name" value="DELTA-1-PYRROLINE-5-CARBOXYLATE SYNTHASE"/>
    <property type="match status" value="1"/>
</dbReference>
<dbReference type="PANTHER" id="PTHR11063">
    <property type="entry name" value="GLUTAMATE SEMIALDEHYDE DEHYDROGENASE"/>
    <property type="match status" value="1"/>
</dbReference>
<dbReference type="Pfam" id="PF00171">
    <property type="entry name" value="Aldedh"/>
    <property type="match status" value="1"/>
</dbReference>
<dbReference type="PIRSF" id="PIRSF000151">
    <property type="entry name" value="GPR"/>
    <property type="match status" value="1"/>
</dbReference>
<dbReference type="SUPFAM" id="SSF53720">
    <property type="entry name" value="ALDH-like"/>
    <property type="match status" value="1"/>
</dbReference>
<dbReference type="PROSITE" id="PS01223">
    <property type="entry name" value="PROA"/>
    <property type="match status" value="1"/>
</dbReference>
<proteinExistence type="inferred from homology"/>
<evidence type="ECO:0000255" key="1">
    <source>
        <dbReference type="HAMAP-Rule" id="MF_00412"/>
    </source>
</evidence>
<comment type="function">
    <text evidence="1">Catalyzes the NADPH-dependent reduction of L-glutamate 5-phosphate into L-glutamate 5-semialdehyde and phosphate. The product spontaneously undergoes cyclization to form 1-pyrroline-5-carboxylate.</text>
</comment>
<comment type="catalytic activity">
    <reaction evidence="1">
        <text>L-glutamate 5-semialdehyde + phosphate + NADP(+) = L-glutamyl 5-phosphate + NADPH + H(+)</text>
        <dbReference type="Rhea" id="RHEA:19541"/>
        <dbReference type="ChEBI" id="CHEBI:15378"/>
        <dbReference type="ChEBI" id="CHEBI:43474"/>
        <dbReference type="ChEBI" id="CHEBI:57783"/>
        <dbReference type="ChEBI" id="CHEBI:58066"/>
        <dbReference type="ChEBI" id="CHEBI:58274"/>
        <dbReference type="ChEBI" id="CHEBI:58349"/>
        <dbReference type="EC" id="1.2.1.41"/>
    </reaction>
</comment>
<comment type="pathway">
    <text evidence="1">Amino-acid biosynthesis; L-proline biosynthesis; L-glutamate 5-semialdehyde from L-glutamate: step 2/2.</text>
</comment>
<comment type="subcellular location">
    <subcellularLocation>
        <location evidence="1">Cytoplasm</location>
    </subcellularLocation>
</comment>
<comment type="similarity">
    <text evidence="1">Belongs to the gamma-glutamyl phosphate reductase family.</text>
</comment>
<protein>
    <recommendedName>
        <fullName evidence="1">Gamma-glutamyl phosphate reductase</fullName>
        <shortName evidence="1">GPR</shortName>
        <ecNumber evidence="1">1.2.1.41</ecNumber>
    </recommendedName>
    <alternativeName>
        <fullName evidence="1">Glutamate-5-semialdehyde dehydrogenase</fullName>
    </alternativeName>
    <alternativeName>
        <fullName evidence="1">Glutamyl-gamma-semialdehyde dehydrogenase</fullName>
        <shortName evidence="1">GSA dehydrogenase</shortName>
    </alternativeName>
</protein>
<feature type="chain" id="PRO_0000340899" description="Gamma-glutamyl phosphate reductase">
    <location>
        <begin position="1"/>
        <end position="420"/>
    </location>
</feature>